<comment type="function">
    <text evidence="1">In association with mitochondrial contact site and cristae organizing system (MICOS) complex components and mitochondrial outer membrane sorting assembly machinery (SAM) complex components may regulate mitochondrial dynamics playing a role in determining mitochondrial length, distribution and motility.</text>
</comment>
<comment type="subunit">
    <text evidence="1">Interacts with mitochondrial contact site and cristae organizing system (MICOS) complex components IMMT/MIC60 and MICOS10/MIC10 (By similarity). Interacts with mitochondrial outer membrane sorting assembly machinery (SAM) complex components SAMM50 and MTX1 (By similarity).</text>
</comment>
<comment type="subcellular location">
    <subcellularLocation>
        <location evidence="1">Cytoplasm</location>
    </subcellularLocation>
    <subcellularLocation>
        <location evidence="1">Mitochondrion</location>
    </subcellularLocation>
    <subcellularLocation>
        <location evidence="1">Mitochondrion outer membrane</location>
    </subcellularLocation>
    <text evidence="1">Associates with the outer mitochondrion membrane, most likely through its C-terminus (By similarity). Not integrated into the mitochondrial outer membrane (By similarity).</text>
</comment>
<evidence type="ECO:0000250" key="1">
    <source>
        <dbReference type="UniProtKB" id="Q9NVT9"/>
    </source>
</evidence>
<evidence type="ECO:0000256" key="2">
    <source>
        <dbReference type="SAM" id="MobiDB-lite"/>
    </source>
</evidence>
<keyword id="KW-0963">Cytoplasm</keyword>
<keyword id="KW-0472">Membrane</keyword>
<keyword id="KW-0496">Mitochondrion</keyword>
<keyword id="KW-1000">Mitochondrion outer membrane</keyword>
<keyword id="KW-1185">Reference proteome</keyword>
<organism>
    <name type="scientific">Gallus gallus</name>
    <name type="common">Chicken</name>
    <dbReference type="NCBI Taxonomy" id="9031"/>
    <lineage>
        <taxon>Eukaryota</taxon>
        <taxon>Metazoa</taxon>
        <taxon>Chordata</taxon>
        <taxon>Craniata</taxon>
        <taxon>Vertebrata</taxon>
        <taxon>Euteleostomi</taxon>
        <taxon>Archelosauria</taxon>
        <taxon>Archosauria</taxon>
        <taxon>Dinosauria</taxon>
        <taxon>Saurischia</taxon>
        <taxon>Theropoda</taxon>
        <taxon>Coelurosauria</taxon>
        <taxon>Aves</taxon>
        <taxon>Neognathae</taxon>
        <taxon>Galloanserae</taxon>
        <taxon>Galliformes</taxon>
        <taxon>Phasianidae</taxon>
        <taxon>Phasianinae</taxon>
        <taxon>Gallus</taxon>
    </lineage>
</organism>
<protein>
    <recommendedName>
        <fullName>Armadillo repeat-containing protein 1</fullName>
    </recommendedName>
</protein>
<accession>Q5ZMQ0</accession>
<name>ARMC1_CHICK</name>
<dbReference type="EMBL" id="AJ719334">
    <property type="protein sequence ID" value="CAG30993.1"/>
    <property type="molecule type" value="mRNA"/>
</dbReference>
<dbReference type="RefSeq" id="NP_001026744.1">
    <property type="nucleotide sequence ID" value="NM_001031573.2"/>
</dbReference>
<dbReference type="RefSeq" id="XP_015138212.1">
    <property type="nucleotide sequence ID" value="XM_015282726.4"/>
</dbReference>
<dbReference type="RefSeq" id="XP_046767673.1">
    <property type="nucleotide sequence ID" value="XM_046911717.1"/>
</dbReference>
<dbReference type="SMR" id="Q5ZMQ0"/>
<dbReference type="FunCoup" id="Q5ZMQ0">
    <property type="interactions" value="1487"/>
</dbReference>
<dbReference type="STRING" id="9031.ENSGALP00000045725"/>
<dbReference type="PaxDb" id="9031-ENSGALP00000000076"/>
<dbReference type="Ensembl" id="ENSGALT00010007284.1">
    <property type="protein sequence ID" value="ENSGALP00010004371.1"/>
    <property type="gene ID" value="ENSGALG00010003121.1"/>
</dbReference>
<dbReference type="GeneID" id="429406"/>
<dbReference type="KEGG" id="gga:429406"/>
<dbReference type="CTD" id="55156"/>
<dbReference type="VEuPathDB" id="HostDB:geneid_429406"/>
<dbReference type="eggNOG" id="ENOG502QU5Q">
    <property type="taxonomic scope" value="Eukaryota"/>
</dbReference>
<dbReference type="GeneTree" id="ENSGT00390000014100"/>
<dbReference type="HOGENOM" id="CLU_077781_0_0_1"/>
<dbReference type="InParanoid" id="Q5ZMQ0"/>
<dbReference type="OMA" id="VNEMNSC"/>
<dbReference type="OrthoDB" id="17335at2759"/>
<dbReference type="PhylomeDB" id="Q5ZMQ0"/>
<dbReference type="TreeFam" id="TF316742"/>
<dbReference type="PRO" id="PR:Q5ZMQ0"/>
<dbReference type="Proteomes" id="UP000000539">
    <property type="component" value="Chromosome 2"/>
</dbReference>
<dbReference type="Bgee" id="ENSGALG00000036567">
    <property type="expression patterns" value="Expressed in heart and 14 other cell types or tissues"/>
</dbReference>
<dbReference type="GO" id="GO:0005741">
    <property type="term" value="C:mitochondrial outer membrane"/>
    <property type="evidence" value="ECO:0007669"/>
    <property type="project" value="UniProtKB-SubCell"/>
</dbReference>
<dbReference type="GO" id="GO:0046872">
    <property type="term" value="F:metal ion binding"/>
    <property type="evidence" value="ECO:0007669"/>
    <property type="project" value="InterPro"/>
</dbReference>
<dbReference type="FunFam" id="1.25.10.10:FF:000365">
    <property type="entry name" value="Armadillo repeat-containing protein 1"/>
    <property type="match status" value="1"/>
</dbReference>
<dbReference type="Gene3D" id="1.25.10.10">
    <property type="entry name" value="Leucine-rich Repeat Variant"/>
    <property type="match status" value="1"/>
</dbReference>
<dbReference type="InterPro" id="IPR011989">
    <property type="entry name" value="ARM-like"/>
</dbReference>
<dbReference type="InterPro" id="IPR016024">
    <property type="entry name" value="ARM-type_fold"/>
</dbReference>
<dbReference type="InterPro" id="IPR000225">
    <property type="entry name" value="Armadillo"/>
</dbReference>
<dbReference type="InterPro" id="IPR016617">
    <property type="entry name" value="ARMC1"/>
</dbReference>
<dbReference type="InterPro" id="IPR036163">
    <property type="entry name" value="HMA_dom_sf"/>
</dbReference>
<dbReference type="PANTHER" id="PTHR46840">
    <property type="entry name" value="ARMADILLO REPEAT-CONTAINING PROTEIN 1"/>
    <property type="match status" value="1"/>
</dbReference>
<dbReference type="PANTHER" id="PTHR46840:SF1">
    <property type="entry name" value="ARMADILLO REPEAT-CONTAINING PROTEIN 1"/>
    <property type="match status" value="1"/>
</dbReference>
<dbReference type="Pfam" id="PF00514">
    <property type="entry name" value="Arm"/>
    <property type="match status" value="1"/>
</dbReference>
<dbReference type="PIRSF" id="PIRSF013899">
    <property type="entry name" value="UCP013899"/>
    <property type="match status" value="1"/>
</dbReference>
<dbReference type="SUPFAM" id="SSF48371">
    <property type="entry name" value="ARM repeat"/>
    <property type="match status" value="1"/>
</dbReference>
<dbReference type="SUPFAM" id="SSF55008">
    <property type="entry name" value="HMA, heavy metal-associated domain"/>
    <property type="match status" value="1"/>
</dbReference>
<dbReference type="PROSITE" id="PS50176">
    <property type="entry name" value="ARM_REPEAT"/>
    <property type="match status" value="1"/>
</dbReference>
<gene>
    <name type="primary">ARMC1</name>
    <name type="ORF">RCJMB04_1h15</name>
</gene>
<proteinExistence type="evidence at transcript level"/>
<feature type="chain" id="PRO_0000240885" description="Armadillo repeat-containing protein 1">
    <location>
        <begin position="1"/>
        <end position="279"/>
    </location>
</feature>
<feature type="repeat" description="ARM">
    <location>
        <begin position="36"/>
        <end position="78"/>
    </location>
</feature>
<feature type="region of interest" description="Disordered" evidence="2">
    <location>
        <begin position="236"/>
        <end position="257"/>
    </location>
</feature>
<feature type="compositionally biased region" description="Basic and acidic residues" evidence="2">
    <location>
        <begin position="243"/>
        <end position="252"/>
    </location>
</feature>
<reference key="1">
    <citation type="journal article" date="2005" name="Genome Biol.">
        <title>Full-length cDNAs from chicken bursal lymphocytes to facilitate gene function analysis.</title>
        <authorList>
            <person name="Caldwell R.B."/>
            <person name="Kierzek A.M."/>
            <person name="Arakawa H."/>
            <person name="Bezzubov Y."/>
            <person name="Zaim J."/>
            <person name="Fiedler P."/>
            <person name="Kutter S."/>
            <person name="Blagodatski A."/>
            <person name="Kostovska D."/>
            <person name="Koter M."/>
            <person name="Plachy J."/>
            <person name="Carninci P."/>
            <person name="Hayashizaki Y."/>
            <person name="Buerstedde J.-M."/>
        </authorList>
    </citation>
    <scope>NUCLEOTIDE SEQUENCE [LARGE SCALE MRNA]</scope>
    <source>
        <strain>CB</strain>
        <tissue>Bursa of Fabricius</tissue>
    </source>
</reference>
<sequence>MNSTMSDEPDALSVVNQLRDLAADPLNRRAIVQDQGCLPGLILFLDHPSPPVVHSALLALRYLAECRANREKMKGELGMMLSLQNVIQKTTTPGETKLLASEVYDILQSSNMSDMDNVNEMNYRRRKAQFFLGSTNKRAKTVVLHIDGLDDSSRRNLCEEALLKIKGVISFTFQMAVQRCVVRIRSDLKAEALATAIASTKVMKAQQVVKSESGEEMLVPFQDTPVEVEQNTDLPEYLPEDESPSKEQDKAVSRVGSHPEGAASWLSTAANFLSRSFYW</sequence>